<accession>A9R1E0</accession>
<proteinExistence type="inferred from homology"/>
<dbReference type="EC" id="3.2.2.9" evidence="1"/>
<dbReference type="EMBL" id="CP000901">
    <property type="protein sequence ID" value="ABX87913.1"/>
    <property type="molecule type" value="Genomic_DNA"/>
</dbReference>
<dbReference type="RefSeq" id="WP_002209368.1">
    <property type="nucleotide sequence ID" value="NZ_CP009935.1"/>
</dbReference>
<dbReference type="SMR" id="A9R1E0"/>
<dbReference type="GeneID" id="57975325"/>
<dbReference type="KEGG" id="ypg:YpAngola_A0989"/>
<dbReference type="PATRIC" id="fig|349746.12.peg.1940"/>
<dbReference type="UniPathway" id="UPA00904">
    <property type="reaction ID" value="UER00871"/>
</dbReference>
<dbReference type="GO" id="GO:0005829">
    <property type="term" value="C:cytosol"/>
    <property type="evidence" value="ECO:0007669"/>
    <property type="project" value="TreeGrafter"/>
</dbReference>
<dbReference type="GO" id="GO:0008782">
    <property type="term" value="F:adenosylhomocysteine nucleosidase activity"/>
    <property type="evidence" value="ECO:0007669"/>
    <property type="project" value="UniProtKB-UniRule"/>
</dbReference>
<dbReference type="GO" id="GO:0008930">
    <property type="term" value="F:methylthioadenosine nucleosidase activity"/>
    <property type="evidence" value="ECO:0007669"/>
    <property type="project" value="UniProtKB-UniRule"/>
</dbReference>
<dbReference type="GO" id="GO:0019509">
    <property type="term" value="P:L-methionine salvage from methylthioadenosine"/>
    <property type="evidence" value="ECO:0007669"/>
    <property type="project" value="UniProtKB-UniRule"/>
</dbReference>
<dbReference type="GO" id="GO:0019284">
    <property type="term" value="P:L-methionine salvage from S-adenosylmethionine"/>
    <property type="evidence" value="ECO:0007669"/>
    <property type="project" value="TreeGrafter"/>
</dbReference>
<dbReference type="GO" id="GO:0046124">
    <property type="term" value="P:purine deoxyribonucleoside catabolic process"/>
    <property type="evidence" value="ECO:0007669"/>
    <property type="project" value="UniProtKB-UniRule"/>
</dbReference>
<dbReference type="CDD" id="cd09008">
    <property type="entry name" value="MTAN"/>
    <property type="match status" value="1"/>
</dbReference>
<dbReference type="FunFam" id="3.40.50.1580:FF:000001">
    <property type="entry name" value="MTA/SAH nucleosidase family protein"/>
    <property type="match status" value="1"/>
</dbReference>
<dbReference type="Gene3D" id="3.40.50.1580">
    <property type="entry name" value="Nucleoside phosphorylase domain"/>
    <property type="match status" value="1"/>
</dbReference>
<dbReference type="HAMAP" id="MF_01684">
    <property type="entry name" value="Salvage_MtnN"/>
    <property type="match status" value="1"/>
</dbReference>
<dbReference type="InterPro" id="IPR010049">
    <property type="entry name" value="MTA_SAH_Nsdase"/>
</dbReference>
<dbReference type="InterPro" id="IPR000845">
    <property type="entry name" value="Nucleoside_phosphorylase_d"/>
</dbReference>
<dbReference type="InterPro" id="IPR035994">
    <property type="entry name" value="Nucleoside_phosphorylase_sf"/>
</dbReference>
<dbReference type="NCBIfam" id="TIGR01704">
    <property type="entry name" value="MTA_SAH-Nsdase"/>
    <property type="match status" value="1"/>
</dbReference>
<dbReference type="NCBIfam" id="NF004079">
    <property type="entry name" value="PRK05584.1"/>
    <property type="match status" value="1"/>
</dbReference>
<dbReference type="PANTHER" id="PTHR46832">
    <property type="entry name" value="5'-METHYLTHIOADENOSINE/S-ADENOSYLHOMOCYSTEINE NUCLEOSIDASE"/>
    <property type="match status" value="1"/>
</dbReference>
<dbReference type="PANTHER" id="PTHR46832:SF1">
    <property type="entry name" value="5'-METHYLTHIOADENOSINE_S-ADENOSYLHOMOCYSTEINE NUCLEOSIDASE"/>
    <property type="match status" value="1"/>
</dbReference>
<dbReference type="Pfam" id="PF01048">
    <property type="entry name" value="PNP_UDP_1"/>
    <property type="match status" value="1"/>
</dbReference>
<dbReference type="SUPFAM" id="SSF53167">
    <property type="entry name" value="Purine and uridine phosphorylases"/>
    <property type="match status" value="1"/>
</dbReference>
<organism>
    <name type="scientific">Yersinia pestis bv. Antiqua (strain Angola)</name>
    <dbReference type="NCBI Taxonomy" id="349746"/>
    <lineage>
        <taxon>Bacteria</taxon>
        <taxon>Pseudomonadati</taxon>
        <taxon>Pseudomonadota</taxon>
        <taxon>Gammaproteobacteria</taxon>
        <taxon>Enterobacterales</taxon>
        <taxon>Yersiniaceae</taxon>
        <taxon>Yersinia</taxon>
    </lineage>
</organism>
<comment type="function">
    <text evidence="1">Catalyzes the irreversible cleavage of the glycosidic bond in both 5'-methylthioadenosine (MTA) and S-adenosylhomocysteine (SAH/AdoHcy) to adenine and the corresponding thioribose, 5'-methylthioribose and S-ribosylhomocysteine, respectively. Also cleaves 5'-deoxyadenosine, a toxic by-product of radical S-adenosylmethionine (SAM) enzymes, into 5-deoxyribose and adenine. Thus, is required for in vivo function of the radical SAM enzymes biotin synthase and lipoic acid synthase, that are inhibited by 5'-deoxyadenosine accumulation.</text>
</comment>
<comment type="catalytic activity">
    <reaction evidence="1">
        <text>S-adenosyl-L-homocysteine + H2O = S-(5-deoxy-D-ribos-5-yl)-L-homocysteine + adenine</text>
        <dbReference type="Rhea" id="RHEA:17805"/>
        <dbReference type="ChEBI" id="CHEBI:15377"/>
        <dbReference type="ChEBI" id="CHEBI:16708"/>
        <dbReference type="ChEBI" id="CHEBI:57856"/>
        <dbReference type="ChEBI" id="CHEBI:58195"/>
        <dbReference type="EC" id="3.2.2.9"/>
    </reaction>
</comment>
<comment type="catalytic activity">
    <reaction evidence="1">
        <text>S-methyl-5'-thioadenosine + H2O = 5-(methylsulfanyl)-D-ribose + adenine</text>
        <dbReference type="Rhea" id="RHEA:13617"/>
        <dbReference type="ChEBI" id="CHEBI:15377"/>
        <dbReference type="ChEBI" id="CHEBI:16708"/>
        <dbReference type="ChEBI" id="CHEBI:17509"/>
        <dbReference type="ChEBI" id="CHEBI:78440"/>
        <dbReference type="EC" id="3.2.2.9"/>
    </reaction>
</comment>
<comment type="catalytic activity">
    <reaction evidence="1">
        <text>5'-deoxyadenosine + H2O = 5-deoxy-D-ribose + adenine</text>
        <dbReference type="Rhea" id="RHEA:29859"/>
        <dbReference type="ChEBI" id="CHEBI:15377"/>
        <dbReference type="ChEBI" id="CHEBI:16708"/>
        <dbReference type="ChEBI" id="CHEBI:17319"/>
        <dbReference type="ChEBI" id="CHEBI:149540"/>
        <dbReference type="EC" id="3.2.2.9"/>
    </reaction>
    <physiologicalReaction direction="left-to-right" evidence="1">
        <dbReference type="Rhea" id="RHEA:29860"/>
    </physiologicalReaction>
</comment>
<comment type="pathway">
    <text evidence="1">Amino-acid biosynthesis; L-methionine biosynthesis via salvage pathway; S-methyl-5-thio-alpha-D-ribose 1-phosphate from S-methyl-5'-thioadenosine (hydrolase route): step 1/2.</text>
</comment>
<comment type="subunit">
    <text evidence="1">Homodimer.</text>
</comment>
<comment type="similarity">
    <text evidence="1">Belongs to the PNP/UDP phosphorylase family. MtnN subfamily.</text>
</comment>
<evidence type="ECO:0000255" key="1">
    <source>
        <dbReference type="HAMAP-Rule" id="MF_01684"/>
    </source>
</evidence>
<reference key="1">
    <citation type="journal article" date="2010" name="J. Bacteriol.">
        <title>Genome sequence of the deep-rooted Yersinia pestis strain Angola reveals new insights into the evolution and pangenome of the plague bacterium.</title>
        <authorList>
            <person name="Eppinger M."/>
            <person name="Worsham P.L."/>
            <person name="Nikolich M.P."/>
            <person name="Riley D.R."/>
            <person name="Sebastian Y."/>
            <person name="Mou S."/>
            <person name="Achtman M."/>
            <person name="Lindler L.E."/>
            <person name="Ravel J."/>
        </authorList>
    </citation>
    <scope>NUCLEOTIDE SEQUENCE [LARGE SCALE GENOMIC DNA]</scope>
    <source>
        <strain>Angola</strain>
    </source>
</reference>
<name>MTNN_YERPG</name>
<sequence>MKVGIIGAMEEEVTLLRDRIENRQTLARAGCEIYTGQLNGIDVALLKSGIGKVAAAMGTTLLLEHCQPDLVINTGSAGGLDSSLKVGDIVVSNEVRYHDADVTAFGYEPGQMAGCPAAFVADEDLIALAENCIQQLKLNAVRGLICSGDAFINGAEPLARIRAAFPTVAAVEMEAAAIGHVCYLFNTPFVVVRAISDVADQASHLSFEEFLVVAAKQSTLMIKAMLTTLAQRG</sequence>
<protein>
    <recommendedName>
        <fullName evidence="1">5'-methylthioadenosine/S-adenosylhomocysteine nucleosidase</fullName>
        <shortName evidence="1">MTA/SAH nucleosidase</shortName>
        <shortName evidence="1">MTAN</shortName>
        <ecNumber evidence="1">3.2.2.9</ecNumber>
    </recommendedName>
    <alternativeName>
        <fullName evidence="1">5'-deoxyadenosine nucleosidase</fullName>
        <shortName evidence="1">DOA nucleosidase</shortName>
        <shortName evidence="1">dAdo nucleosidase</shortName>
    </alternativeName>
    <alternativeName>
        <fullName evidence="1">5'-methylthioadenosine nucleosidase</fullName>
        <shortName evidence="1">MTA nucleosidase</shortName>
    </alternativeName>
    <alternativeName>
        <fullName evidence="1">S-adenosylhomocysteine nucleosidase</fullName>
        <shortName evidence="1">AdoHcy nucleosidase</shortName>
        <shortName evidence="1">SAH nucleosidase</shortName>
        <shortName evidence="1">SRH nucleosidase</shortName>
    </alternativeName>
</protein>
<feature type="chain" id="PRO_0000359393" description="5'-methylthioadenosine/S-adenosylhomocysteine nucleosidase">
    <location>
        <begin position="1"/>
        <end position="233"/>
    </location>
</feature>
<feature type="active site" description="Proton acceptor" evidence="1">
    <location>
        <position position="12"/>
    </location>
</feature>
<feature type="active site" description="Proton donor" evidence="1">
    <location>
        <position position="197"/>
    </location>
</feature>
<feature type="binding site" evidence="1">
    <location>
        <position position="78"/>
    </location>
    <ligand>
        <name>substrate</name>
    </ligand>
</feature>
<feature type="binding site" evidence="1">
    <location>
        <position position="152"/>
    </location>
    <ligand>
        <name>substrate</name>
    </ligand>
</feature>
<feature type="binding site" evidence="1">
    <location>
        <begin position="173"/>
        <end position="174"/>
    </location>
    <ligand>
        <name>substrate</name>
    </ligand>
</feature>
<keyword id="KW-0028">Amino-acid biosynthesis</keyword>
<keyword id="KW-0378">Hydrolase</keyword>
<keyword id="KW-0486">Methionine biosynthesis</keyword>
<gene>
    <name evidence="1" type="primary">mtnN</name>
    <name type="ordered locus">YpAngola_A0989</name>
</gene>